<reference key="1">
    <citation type="journal article" date="2002" name="Nature">
        <title>Sequence and analysis of chromosome 2 of Dictyostelium discoideum.</title>
        <authorList>
            <person name="Gloeckner G."/>
            <person name="Eichinger L."/>
            <person name="Szafranski K."/>
            <person name="Pachebat J.A."/>
            <person name="Bankier A.T."/>
            <person name="Dear P.H."/>
            <person name="Lehmann R."/>
            <person name="Baumgart C."/>
            <person name="Parra G."/>
            <person name="Abril J.F."/>
            <person name="Guigo R."/>
            <person name="Kumpf K."/>
            <person name="Tunggal B."/>
            <person name="Cox E.C."/>
            <person name="Quail M.A."/>
            <person name="Platzer M."/>
            <person name="Rosenthal A."/>
            <person name="Noegel A.A."/>
        </authorList>
    </citation>
    <scope>NUCLEOTIDE SEQUENCE [LARGE SCALE GENOMIC DNA]</scope>
    <source>
        <strain>AX4</strain>
    </source>
</reference>
<reference key="2">
    <citation type="journal article" date="2005" name="Nature">
        <title>The genome of the social amoeba Dictyostelium discoideum.</title>
        <authorList>
            <person name="Eichinger L."/>
            <person name="Pachebat J.A."/>
            <person name="Gloeckner G."/>
            <person name="Rajandream M.A."/>
            <person name="Sucgang R."/>
            <person name="Berriman M."/>
            <person name="Song J."/>
            <person name="Olsen R."/>
            <person name="Szafranski K."/>
            <person name="Xu Q."/>
            <person name="Tunggal B."/>
            <person name="Kummerfeld S."/>
            <person name="Madera M."/>
            <person name="Konfortov B.A."/>
            <person name="Rivero F."/>
            <person name="Bankier A.T."/>
            <person name="Lehmann R."/>
            <person name="Hamlin N."/>
            <person name="Davies R."/>
            <person name="Gaudet P."/>
            <person name="Fey P."/>
            <person name="Pilcher K."/>
            <person name="Chen G."/>
            <person name="Saunders D."/>
            <person name="Sodergren E.J."/>
            <person name="Davis P."/>
            <person name="Kerhornou A."/>
            <person name="Nie X."/>
            <person name="Hall N."/>
            <person name="Anjard C."/>
            <person name="Hemphill L."/>
            <person name="Bason N."/>
            <person name="Farbrother P."/>
            <person name="Desany B."/>
            <person name="Just E."/>
            <person name="Morio T."/>
            <person name="Rost R."/>
            <person name="Churcher C.M."/>
            <person name="Cooper J."/>
            <person name="Haydock S."/>
            <person name="van Driessche N."/>
            <person name="Cronin A."/>
            <person name="Goodhead I."/>
            <person name="Muzny D.M."/>
            <person name="Mourier T."/>
            <person name="Pain A."/>
            <person name="Lu M."/>
            <person name="Harper D."/>
            <person name="Lindsay R."/>
            <person name="Hauser H."/>
            <person name="James K.D."/>
            <person name="Quiles M."/>
            <person name="Madan Babu M."/>
            <person name="Saito T."/>
            <person name="Buchrieser C."/>
            <person name="Wardroper A."/>
            <person name="Felder M."/>
            <person name="Thangavelu M."/>
            <person name="Johnson D."/>
            <person name="Knights A."/>
            <person name="Loulseged H."/>
            <person name="Mungall K.L."/>
            <person name="Oliver K."/>
            <person name="Price C."/>
            <person name="Quail M.A."/>
            <person name="Urushihara H."/>
            <person name="Hernandez J."/>
            <person name="Rabbinowitsch E."/>
            <person name="Steffen D."/>
            <person name="Sanders M."/>
            <person name="Ma J."/>
            <person name="Kohara Y."/>
            <person name="Sharp S."/>
            <person name="Simmonds M.N."/>
            <person name="Spiegler S."/>
            <person name="Tivey A."/>
            <person name="Sugano S."/>
            <person name="White B."/>
            <person name="Walker D."/>
            <person name="Woodward J.R."/>
            <person name="Winckler T."/>
            <person name="Tanaka Y."/>
            <person name="Shaulsky G."/>
            <person name="Schleicher M."/>
            <person name="Weinstock G.M."/>
            <person name="Rosenthal A."/>
            <person name="Cox E.C."/>
            <person name="Chisholm R.L."/>
            <person name="Gibbs R.A."/>
            <person name="Loomis W.F."/>
            <person name="Platzer M."/>
            <person name="Kay R.R."/>
            <person name="Williams J.G."/>
            <person name="Dear P.H."/>
            <person name="Noegel A.A."/>
            <person name="Barrell B.G."/>
            <person name="Kuspa A."/>
        </authorList>
    </citation>
    <scope>NUCLEOTIDE SEQUENCE [LARGE SCALE GENOMIC DNA]</scope>
    <source>
        <strain>AX4</strain>
    </source>
</reference>
<sequence>MDKKINLDYLIDDIIVNSDDLTPFQCQICFNSVIDFKKETLSFDVLQCRNGHISCHECWNRQLSIKQECPSCKVKTLPSELSRNIFLENAFRALKVICPNKFKESKFQGEAVHCENGCPEILKVELLEHHLKECQYQFIKCPNNSNKCKYIIRKNQIEHHNQSVCDYSLIQCEKCSELIERKKLNKHIESECDTLMITCSKCSASIGKKLMNHHLETDCPMEEISCLYKAGGCNKRFLRSQLSQHLSENNNHIFYIQNVMDLHKLQLDECNQDYRKLEKQNRDLEKRLFYLESTVNSTVINSKPHECGGGGGGGSGNNVYKGKWVINNWDRKLREYPISKSLNSPFFQIGSSKFFIMLYPNGNNEVKGFLSIFLYKIYDRPSLVKYSLEAKNIDPTKNYKNTHTNNFINNNGNGWFKWIENKSQNGFFSNNSLTISISIKIIQDHSLVTE</sequence>
<feature type="chain" id="PRO_0000393757" description="TNF receptor-associated factor family protein DDB_G0273433/DDB_G0273509">
    <location>
        <begin position="1"/>
        <end position="450"/>
    </location>
</feature>
<feature type="domain" description="MATH" evidence="3">
    <location>
        <begin position="319"/>
        <end position="439"/>
    </location>
</feature>
<feature type="zinc finger region" description="RING-type; degenerate">
    <location>
        <begin position="26"/>
        <end position="73"/>
    </location>
</feature>
<feature type="zinc finger region" description="TRAF-type 1" evidence="4">
    <location>
        <begin position="129"/>
        <end position="185"/>
    </location>
</feature>
<feature type="zinc finger region" description="TRAF-type 2" evidence="4">
    <location>
        <begin position="186"/>
        <end position="243"/>
    </location>
</feature>
<feature type="coiled-coil region" evidence="2">
    <location>
        <begin position="257"/>
        <end position="297"/>
    </location>
</feature>
<evidence type="ECO:0000250" key="1"/>
<evidence type="ECO:0000255" key="2"/>
<evidence type="ECO:0000255" key="3">
    <source>
        <dbReference type="PROSITE-ProRule" id="PRU00129"/>
    </source>
</evidence>
<evidence type="ECO:0000255" key="4">
    <source>
        <dbReference type="PROSITE-ProRule" id="PRU00207"/>
    </source>
</evidence>
<evidence type="ECO:0000305" key="5"/>
<protein>
    <recommendedName>
        <fullName>TNF receptor-associated factor family protein DDB_G0273433/DDB_G0273509</fullName>
    </recommendedName>
</protein>
<organism>
    <name type="scientific">Dictyostelium discoideum</name>
    <name type="common">Social amoeba</name>
    <dbReference type="NCBI Taxonomy" id="44689"/>
    <lineage>
        <taxon>Eukaryota</taxon>
        <taxon>Amoebozoa</taxon>
        <taxon>Evosea</taxon>
        <taxon>Eumycetozoa</taxon>
        <taxon>Dictyostelia</taxon>
        <taxon>Dictyosteliales</taxon>
        <taxon>Dictyosteliaceae</taxon>
        <taxon>Dictyostelium</taxon>
    </lineage>
</organism>
<gene>
    <name type="ORF">DDB_G0273433</name>
</gene>
<gene>
    <name type="ORF">DDB_G0273509</name>
</gene>
<dbReference type="EMBL" id="AAFI02000010">
    <property type="protein sequence ID" value="EAL70671.1"/>
    <property type="molecule type" value="Genomic_DNA"/>
</dbReference>
<dbReference type="EMBL" id="AAFI02000010">
    <property type="protein sequence ID" value="EAL70709.1"/>
    <property type="molecule type" value="Genomic_DNA"/>
</dbReference>
<dbReference type="RefSeq" id="XP_644615.1">
    <property type="nucleotide sequence ID" value="XM_639523.1"/>
</dbReference>
<dbReference type="RefSeq" id="XP_644635.1">
    <property type="nucleotide sequence ID" value="XM_639543.1"/>
</dbReference>
<dbReference type="SMR" id="Q557K0"/>
<dbReference type="FunCoup" id="Q557K0">
    <property type="interactions" value="10"/>
</dbReference>
<dbReference type="STRING" id="44689.Q557K0"/>
<dbReference type="PaxDb" id="44689-DDB0168208"/>
<dbReference type="EnsemblProtists" id="EAL70671">
    <property type="protein sequence ID" value="EAL70671"/>
    <property type="gene ID" value="DDB_G0273433"/>
</dbReference>
<dbReference type="EnsemblProtists" id="EAL70709">
    <property type="protein sequence ID" value="EAL70709"/>
    <property type="gene ID" value="DDB_G0273509"/>
</dbReference>
<dbReference type="GeneID" id="8618979"/>
<dbReference type="GeneID" id="8618998"/>
<dbReference type="KEGG" id="ddi:DDB_G0273433"/>
<dbReference type="KEGG" id="ddi:DDB_G0273509"/>
<dbReference type="dictyBase" id="DDB_G0273433">
    <property type="gene designation" value="trafK-1"/>
</dbReference>
<dbReference type="dictyBase" id="DDB_G0273509">
    <property type="gene designation" value="trafK-2"/>
</dbReference>
<dbReference type="VEuPathDB" id="AmoebaDB:DDB_G0273509"/>
<dbReference type="eggNOG" id="KOG0297">
    <property type="taxonomic scope" value="Eukaryota"/>
</dbReference>
<dbReference type="HOGENOM" id="CLU_040980_0_0_1"/>
<dbReference type="InParanoid" id="Q557K0"/>
<dbReference type="OMA" id="HISCHEC"/>
<dbReference type="PhylomeDB" id="Q557K0"/>
<dbReference type="PRO" id="PR:Q557K0"/>
<dbReference type="Proteomes" id="UP000002195">
    <property type="component" value="Chromosome 2"/>
</dbReference>
<dbReference type="GO" id="GO:0005737">
    <property type="term" value="C:cytoplasm"/>
    <property type="evidence" value="ECO:0000318"/>
    <property type="project" value="GO_Central"/>
</dbReference>
<dbReference type="GO" id="GO:0008270">
    <property type="term" value="F:zinc ion binding"/>
    <property type="evidence" value="ECO:0007669"/>
    <property type="project" value="UniProtKB-KW"/>
</dbReference>
<dbReference type="CDD" id="cd00121">
    <property type="entry name" value="MATH"/>
    <property type="match status" value="1"/>
</dbReference>
<dbReference type="Gene3D" id="2.60.210.10">
    <property type="entry name" value="Apoptosis, Tumor Necrosis Factor Receptor Associated Protein 2, Chain A"/>
    <property type="match status" value="1"/>
</dbReference>
<dbReference type="Gene3D" id="3.30.40.10">
    <property type="entry name" value="Zinc/RING finger domain, C3HC4 (zinc finger)"/>
    <property type="match status" value="3"/>
</dbReference>
<dbReference type="InterPro" id="IPR002083">
    <property type="entry name" value="MATH/TRAF_dom"/>
</dbReference>
<dbReference type="InterPro" id="IPR008974">
    <property type="entry name" value="TRAF-like"/>
</dbReference>
<dbReference type="InterPro" id="IPR013083">
    <property type="entry name" value="Znf_RING/FYVE/PHD"/>
</dbReference>
<dbReference type="InterPro" id="IPR001293">
    <property type="entry name" value="Znf_TRAF"/>
</dbReference>
<dbReference type="PANTHER" id="PTHR10131">
    <property type="entry name" value="TNF RECEPTOR ASSOCIATED FACTOR"/>
    <property type="match status" value="1"/>
</dbReference>
<dbReference type="PANTHER" id="PTHR10131:SF141">
    <property type="entry name" value="TNF RECEPTOR-ASSOCIATED FACTOR FAMILY PROTEIN DDB_G0273433_DDB_G0273509"/>
    <property type="match status" value="1"/>
</dbReference>
<dbReference type="Pfam" id="PF22486">
    <property type="entry name" value="MATH_2"/>
    <property type="match status" value="1"/>
</dbReference>
<dbReference type="Pfam" id="PF02176">
    <property type="entry name" value="zf-TRAF"/>
    <property type="match status" value="1"/>
</dbReference>
<dbReference type="SUPFAM" id="SSF57850">
    <property type="entry name" value="RING/U-box"/>
    <property type="match status" value="1"/>
</dbReference>
<dbReference type="SUPFAM" id="SSF49599">
    <property type="entry name" value="TRAF domain-like"/>
    <property type="match status" value="2"/>
</dbReference>
<dbReference type="PROSITE" id="PS50144">
    <property type="entry name" value="MATH"/>
    <property type="match status" value="1"/>
</dbReference>
<dbReference type="PROSITE" id="PS50145">
    <property type="entry name" value="ZF_TRAF"/>
    <property type="match status" value="2"/>
</dbReference>
<name>Y3509_DICDI</name>
<proteinExistence type="inferred from homology"/>
<keyword id="KW-0175">Coiled coil</keyword>
<keyword id="KW-0963">Cytoplasm</keyword>
<keyword id="KW-0479">Metal-binding</keyword>
<keyword id="KW-1185">Reference proteome</keyword>
<keyword id="KW-0677">Repeat</keyword>
<keyword id="KW-0862">Zinc</keyword>
<keyword id="KW-0863">Zinc-finger</keyword>
<comment type="function">
    <text evidence="1">Probable adapter protein and signal transducer that links members of the tumor necrosis factor receptor family to different signaling pathways by association with the receptor cytoplasmic domain and kinases.</text>
</comment>
<comment type="subcellular location">
    <subcellularLocation>
        <location evidence="1">Cytoplasm</location>
    </subcellularLocation>
</comment>
<comment type="domain">
    <text>The MATH/TRAF domain binds to receptor cytoplasmic domains.</text>
</comment>
<comment type="similarity">
    <text evidence="5">Belongs to the TNF receptor-associated factor family. A subfamily.</text>
</comment>
<comment type="caution">
    <text evidence="5">The gene for this protein is duplicated in strains AX3 and AX4. These strains contain a duplication of a segment of 750 kb of chromosome 2 compared to the corresponding sequence in strain AX2.</text>
</comment>
<accession>Q557K0</accession>
<accession>Q86KI3</accession>